<gene>
    <name type="primary">PRDX3</name>
    <name type="synonym">AOP1</name>
</gene>
<accession>P35705</accession>
<accession>Q3SZA8</accession>
<proteinExistence type="evidence at protein level"/>
<organism>
    <name type="scientific">Bos taurus</name>
    <name type="common">Bovine</name>
    <dbReference type="NCBI Taxonomy" id="9913"/>
    <lineage>
        <taxon>Eukaryota</taxon>
        <taxon>Metazoa</taxon>
        <taxon>Chordata</taxon>
        <taxon>Craniata</taxon>
        <taxon>Vertebrata</taxon>
        <taxon>Euteleostomi</taxon>
        <taxon>Mammalia</taxon>
        <taxon>Eutheria</taxon>
        <taxon>Laurasiatheria</taxon>
        <taxon>Artiodactyla</taxon>
        <taxon>Ruminantia</taxon>
        <taxon>Pecora</taxon>
        <taxon>Bovidae</taxon>
        <taxon>Bovinae</taxon>
        <taxon>Bos</taxon>
    </lineage>
</organism>
<evidence type="ECO:0000250" key="1">
    <source>
        <dbReference type="UniProtKB" id="P20108"/>
    </source>
</evidence>
<evidence type="ECO:0000250" key="2">
    <source>
        <dbReference type="UniProtKB" id="P30048"/>
    </source>
</evidence>
<evidence type="ECO:0000255" key="3">
    <source>
        <dbReference type="PROSITE-ProRule" id="PRU00691"/>
    </source>
</evidence>
<evidence type="ECO:0000269" key="4">
    <source>
    </source>
</evidence>
<evidence type="ECO:0000269" key="5">
    <source>
    </source>
</evidence>
<evidence type="ECO:0000269" key="6">
    <source>
    </source>
</evidence>
<evidence type="ECO:0000303" key="7">
    <source>
    </source>
</evidence>
<evidence type="ECO:0000303" key="8">
    <source>
    </source>
</evidence>
<evidence type="ECO:0000305" key="9"/>
<evidence type="ECO:0000305" key="10">
    <source>
    </source>
</evidence>
<evidence type="ECO:0007744" key="11">
    <source>
        <dbReference type="PDB" id="4MH3"/>
    </source>
</evidence>
<evidence type="ECO:0007829" key="12">
    <source>
        <dbReference type="PDB" id="4MH2"/>
    </source>
</evidence>
<keyword id="KW-0002">3D-structure</keyword>
<keyword id="KW-0007">Acetylation</keyword>
<keyword id="KW-0049">Antioxidant</keyword>
<keyword id="KW-0963">Cytoplasm</keyword>
<keyword id="KW-0903">Direct protein sequencing</keyword>
<keyword id="KW-1015">Disulfide bond</keyword>
<keyword id="KW-0967">Endosome</keyword>
<keyword id="KW-0449">Lipoprotein</keyword>
<keyword id="KW-0496">Mitochondrion</keyword>
<keyword id="KW-0560">Oxidoreductase</keyword>
<keyword id="KW-0564">Palmitate</keyword>
<keyword id="KW-0575">Peroxidase</keyword>
<keyword id="KW-0597">Phosphoprotein</keyword>
<keyword id="KW-0676">Redox-active center</keyword>
<keyword id="KW-1185">Reference proteome</keyword>
<keyword id="KW-0809">Transit peptide</keyword>
<protein>
    <recommendedName>
        <fullName>Thioredoxin-dependent peroxide reductase, mitochondrial</fullName>
        <ecNumber evidence="2">1.11.1.24</ecNumber>
    </recommendedName>
    <alternativeName>
        <fullName>Antioxidant protein 1</fullName>
        <shortName>AOP-1</shortName>
    </alternativeName>
    <alternativeName>
        <fullName>Peroxiredoxin-3</fullName>
    </alternativeName>
    <alternativeName>
        <fullName evidence="7 8">Protein SP-22</fullName>
    </alternativeName>
    <alternativeName>
        <fullName evidence="9">Thioredoxin-dependent peroxiredoxin 3</fullName>
    </alternativeName>
</protein>
<dbReference type="EC" id="1.11.1.24" evidence="2"/>
<dbReference type="EMBL" id="D82025">
    <property type="protein sequence ID" value="BAA11511.1"/>
    <property type="molecule type" value="mRNA"/>
</dbReference>
<dbReference type="EMBL" id="BC103009">
    <property type="protein sequence ID" value="AAI03010.1"/>
    <property type="molecule type" value="mRNA"/>
</dbReference>
<dbReference type="PIR" id="JC2258">
    <property type="entry name" value="JC2258"/>
</dbReference>
<dbReference type="RefSeq" id="NP_776857.1">
    <property type="nucleotide sequence ID" value="NM_174432.2"/>
</dbReference>
<dbReference type="PDB" id="1ZYE">
    <property type="method" value="X-ray"/>
    <property type="resolution" value="3.30 A"/>
    <property type="chains" value="A/B/C/D/E/F/G/H/I/J/K/L=63-257"/>
</dbReference>
<dbReference type="PDB" id="4MH2">
    <property type="method" value="X-ray"/>
    <property type="resolution" value="2.20 A"/>
    <property type="chains" value="A/B/C/D/E/F/G/H/I/J/K/L=63-257"/>
</dbReference>
<dbReference type="PDB" id="4MH3">
    <property type="method" value="X-ray"/>
    <property type="resolution" value="2.40 A"/>
    <property type="chains" value="A/B/C/D/E/F/G/H/I/J/K/L=63-257"/>
</dbReference>
<dbReference type="PDBsum" id="1ZYE"/>
<dbReference type="PDBsum" id="4MH2"/>
<dbReference type="PDBsum" id="4MH3"/>
<dbReference type="SMR" id="P35705"/>
<dbReference type="DIP" id="DIP-48458N"/>
<dbReference type="FunCoup" id="P35705">
    <property type="interactions" value="1304"/>
</dbReference>
<dbReference type="STRING" id="9913.ENSBTAP00000011505"/>
<dbReference type="PeroxiBase" id="4502">
    <property type="entry name" value="Bt2CysPrx03"/>
</dbReference>
<dbReference type="PaxDb" id="9913-ENSBTAP00000011505"/>
<dbReference type="PeptideAtlas" id="P35705"/>
<dbReference type="Ensembl" id="ENSBTAT00000011505.3">
    <property type="protein sequence ID" value="ENSBTAP00000011505.1"/>
    <property type="gene ID" value="ENSBTAG00000008731.4"/>
</dbReference>
<dbReference type="GeneID" id="281998"/>
<dbReference type="KEGG" id="bta:281998"/>
<dbReference type="CTD" id="10935"/>
<dbReference type="VEuPathDB" id="HostDB:ENSBTAG00000008731"/>
<dbReference type="VGNC" id="VGNC:33301">
    <property type="gene designation" value="PRDX3"/>
</dbReference>
<dbReference type="eggNOG" id="KOG0852">
    <property type="taxonomic scope" value="Eukaryota"/>
</dbReference>
<dbReference type="GeneTree" id="ENSGT00940000153430"/>
<dbReference type="HOGENOM" id="CLU_042529_21_0_1"/>
<dbReference type="InParanoid" id="P35705"/>
<dbReference type="OMA" id="KDSKQYF"/>
<dbReference type="OrthoDB" id="185659at2759"/>
<dbReference type="TreeFam" id="TF105181"/>
<dbReference type="Reactome" id="R-BTA-3299685">
    <property type="pathway name" value="Detoxification of Reactive Oxygen Species"/>
</dbReference>
<dbReference type="EvolutionaryTrace" id="P35705"/>
<dbReference type="Proteomes" id="UP000009136">
    <property type="component" value="Chromosome 26"/>
</dbReference>
<dbReference type="Bgee" id="ENSBTAG00000008731">
    <property type="expression patterns" value="Expressed in diaphragm and 102 other cell types or tissues"/>
</dbReference>
<dbReference type="GO" id="GO:0005829">
    <property type="term" value="C:cytosol"/>
    <property type="evidence" value="ECO:0000318"/>
    <property type="project" value="GO_Central"/>
</dbReference>
<dbReference type="GO" id="GO:0005769">
    <property type="term" value="C:early endosome"/>
    <property type="evidence" value="ECO:0007669"/>
    <property type="project" value="UniProtKB-SubCell"/>
</dbReference>
<dbReference type="GO" id="GO:0005759">
    <property type="term" value="C:mitochondrial matrix"/>
    <property type="evidence" value="ECO:0007669"/>
    <property type="project" value="UniProtKB-SubCell"/>
</dbReference>
<dbReference type="GO" id="GO:0005739">
    <property type="term" value="C:mitochondrion"/>
    <property type="evidence" value="ECO:0000318"/>
    <property type="project" value="GO_Central"/>
</dbReference>
<dbReference type="GO" id="GO:0005654">
    <property type="term" value="C:nucleoplasm"/>
    <property type="evidence" value="ECO:0007669"/>
    <property type="project" value="Ensembl"/>
</dbReference>
<dbReference type="GO" id="GO:0005886">
    <property type="term" value="C:plasma membrane"/>
    <property type="evidence" value="ECO:0007669"/>
    <property type="project" value="Ensembl"/>
</dbReference>
<dbReference type="GO" id="GO:0032991">
    <property type="term" value="C:protein-containing complex"/>
    <property type="evidence" value="ECO:0007669"/>
    <property type="project" value="Ensembl"/>
</dbReference>
<dbReference type="GO" id="GO:0043027">
    <property type="term" value="F:cysteine-type endopeptidase inhibitor activity involved in apoptotic process"/>
    <property type="evidence" value="ECO:0007669"/>
    <property type="project" value="Ensembl"/>
</dbReference>
<dbReference type="GO" id="GO:0042802">
    <property type="term" value="F:identical protein binding"/>
    <property type="evidence" value="ECO:0000353"/>
    <property type="project" value="IntAct"/>
</dbReference>
<dbReference type="GO" id="GO:0019901">
    <property type="term" value="F:protein kinase binding"/>
    <property type="evidence" value="ECO:0007669"/>
    <property type="project" value="Ensembl"/>
</dbReference>
<dbReference type="GO" id="GO:0008379">
    <property type="term" value="F:thioredoxin peroxidase activity"/>
    <property type="evidence" value="ECO:0000318"/>
    <property type="project" value="GO_Central"/>
</dbReference>
<dbReference type="GO" id="GO:0045454">
    <property type="term" value="P:cell redox homeostasis"/>
    <property type="evidence" value="ECO:0000318"/>
    <property type="project" value="GO_Central"/>
</dbReference>
<dbReference type="GO" id="GO:0034614">
    <property type="term" value="P:cellular response to reactive oxygen species"/>
    <property type="evidence" value="ECO:0007669"/>
    <property type="project" value="Ensembl"/>
</dbReference>
<dbReference type="GO" id="GO:0042744">
    <property type="term" value="P:hydrogen peroxide catabolic process"/>
    <property type="evidence" value="ECO:0000318"/>
    <property type="project" value="GO_Central"/>
</dbReference>
<dbReference type="GO" id="GO:0001893">
    <property type="term" value="P:maternal placenta development"/>
    <property type="evidence" value="ECO:0007669"/>
    <property type="project" value="Ensembl"/>
</dbReference>
<dbReference type="GO" id="GO:0007005">
    <property type="term" value="P:mitochondrion organization"/>
    <property type="evidence" value="ECO:0007669"/>
    <property type="project" value="Ensembl"/>
</dbReference>
<dbReference type="GO" id="GO:0030099">
    <property type="term" value="P:myeloid cell differentiation"/>
    <property type="evidence" value="ECO:0007669"/>
    <property type="project" value="Ensembl"/>
</dbReference>
<dbReference type="GO" id="GO:0043066">
    <property type="term" value="P:negative regulation of apoptotic process"/>
    <property type="evidence" value="ECO:0007669"/>
    <property type="project" value="Ensembl"/>
</dbReference>
<dbReference type="GO" id="GO:0008284">
    <property type="term" value="P:positive regulation of cell population proliferation"/>
    <property type="evidence" value="ECO:0007669"/>
    <property type="project" value="Ensembl"/>
</dbReference>
<dbReference type="GO" id="GO:0051881">
    <property type="term" value="P:regulation of mitochondrial membrane potential"/>
    <property type="evidence" value="ECO:0007669"/>
    <property type="project" value="Ensembl"/>
</dbReference>
<dbReference type="GO" id="GO:0042542">
    <property type="term" value="P:response to hydrogen peroxide"/>
    <property type="evidence" value="ECO:0007669"/>
    <property type="project" value="Ensembl"/>
</dbReference>
<dbReference type="GO" id="GO:0032496">
    <property type="term" value="P:response to lipopolysaccharide"/>
    <property type="evidence" value="ECO:0007669"/>
    <property type="project" value="Ensembl"/>
</dbReference>
<dbReference type="GO" id="GO:0006979">
    <property type="term" value="P:response to oxidative stress"/>
    <property type="evidence" value="ECO:0000318"/>
    <property type="project" value="GO_Central"/>
</dbReference>
<dbReference type="CDD" id="cd03015">
    <property type="entry name" value="PRX_Typ2cys"/>
    <property type="match status" value="1"/>
</dbReference>
<dbReference type="FunFam" id="3.40.30.10:FF:000003">
    <property type="entry name" value="Peroxiredoxin 1"/>
    <property type="match status" value="1"/>
</dbReference>
<dbReference type="Gene3D" id="3.40.30.10">
    <property type="entry name" value="Glutaredoxin"/>
    <property type="match status" value="1"/>
</dbReference>
<dbReference type="InterPro" id="IPR000866">
    <property type="entry name" value="AhpC/TSA"/>
</dbReference>
<dbReference type="InterPro" id="IPR050217">
    <property type="entry name" value="Peroxiredoxin"/>
</dbReference>
<dbReference type="InterPro" id="IPR019479">
    <property type="entry name" value="Peroxiredoxin_C"/>
</dbReference>
<dbReference type="InterPro" id="IPR036249">
    <property type="entry name" value="Thioredoxin-like_sf"/>
</dbReference>
<dbReference type="InterPro" id="IPR013766">
    <property type="entry name" value="Thioredoxin_domain"/>
</dbReference>
<dbReference type="PANTHER" id="PTHR10681">
    <property type="entry name" value="THIOREDOXIN PEROXIDASE"/>
    <property type="match status" value="1"/>
</dbReference>
<dbReference type="PANTHER" id="PTHR10681:SF128">
    <property type="entry name" value="THIOREDOXIN-DEPENDENT PEROXIDE REDUCTASE, MITOCHONDRIAL"/>
    <property type="match status" value="1"/>
</dbReference>
<dbReference type="Pfam" id="PF10417">
    <property type="entry name" value="1-cysPrx_C"/>
    <property type="match status" value="1"/>
</dbReference>
<dbReference type="Pfam" id="PF00578">
    <property type="entry name" value="AhpC-TSA"/>
    <property type="match status" value="1"/>
</dbReference>
<dbReference type="SUPFAM" id="SSF52833">
    <property type="entry name" value="Thioredoxin-like"/>
    <property type="match status" value="1"/>
</dbReference>
<dbReference type="PROSITE" id="PS51352">
    <property type="entry name" value="THIOREDOXIN_2"/>
    <property type="match status" value="1"/>
</dbReference>
<comment type="function">
    <text evidence="1 2">Thiol-specific peroxidase that catalyzes the reduction of hydrogen peroxide and organic hydroperoxides to water and alcohols, respectively. Plays a role in cell protection against oxidative stress by detoxifying peroxides. Acts synergistically with MAP3K13 to regulate the activation of NF-kappa-B in the cytosol (By similarity). Required for the maintenance of physical strength (By similarity).</text>
</comment>
<comment type="catalytic activity">
    <reaction evidence="2">
        <text>a hydroperoxide + [thioredoxin]-dithiol = an alcohol + [thioredoxin]-disulfide + H2O</text>
        <dbReference type="Rhea" id="RHEA:62620"/>
        <dbReference type="Rhea" id="RHEA-COMP:10698"/>
        <dbReference type="Rhea" id="RHEA-COMP:10700"/>
        <dbReference type="ChEBI" id="CHEBI:15377"/>
        <dbReference type="ChEBI" id="CHEBI:29950"/>
        <dbReference type="ChEBI" id="CHEBI:30879"/>
        <dbReference type="ChEBI" id="CHEBI:35924"/>
        <dbReference type="ChEBI" id="CHEBI:50058"/>
        <dbReference type="EC" id="1.11.1.24"/>
    </reaction>
</comment>
<comment type="subunit">
    <text evidence="2 4 5">Homodimer; disulfide-linked, upon oxidation. 6 homodimers assemble to form a ring-like dodecamer (PubMed:16271889, PubMed:25906064). Interacts with NEK6 (By similarity). Interacts with LRRK2 (By similarity). Interacts with MAP3K13 (By similarity). Interacts with RPS6KC1 (via PX domain) (By similarity).</text>
</comment>
<comment type="interaction">
    <interactant intactId="EBI-15559045">
        <id>P35705</id>
    </interactant>
    <interactant intactId="EBI-15559045">
        <id>P35705</id>
        <label>PRDX3</label>
    </interactant>
    <organismsDiffer>false</organismsDiffer>
    <experiments>4</experiments>
</comment>
<comment type="subcellular location">
    <subcellularLocation>
        <location evidence="6">Mitochondrion matrix</location>
    </subcellularLocation>
    <subcellularLocation>
        <location evidence="2">Cytoplasm</location>
    </subcellularLocation>
    <subcellularLocation>
        <location evidence="2">Early endosome</location>
    </subcellularLocation>
    <text evidence="2">Localizes to early endosomes in a RPS6KC1-dependent manner.</text>
</comment>
<comment type="tissue specificity">
    <text evidence="6">Predominantly expressed in adrenal cortex. Also detected in liver, renal cortex and medulla, and adrenal medulla (at protein level).</text>
</comment>
<comment type="PTM">
    <text evidence="2">Phosphorylated by LRRK2; phosphorylation reduces perodixase activity.</text>
</comment>
<comment type="PTM">
    <text evidence="2">The enzyme can be inactivated by further oxidation of the cysteine sulfenic acid (C(P)-SOH) to sulphinic acid (C(P)-SO2H) and sulphonic acid (C(P)-SO3H) instead of its condensation to a disulfide bond.</text>
</comment>
<comment type="PTM">
    <text evidence="1">S-palmitoylated.</text>
</comment>
<comment type="miscellaneous">
    <text evidence="10">The active site is a conserved redox-active cysteine residue, the peroxidatic cysteine (C(P)), which makes the nucleophilic attack on the peroxide substrate. The peroxide oxidizes the C(P)-SH to cysteine sulfenic acid (C(P)-SOH), which then reacts with another cysteine residue, the resolving cysteine (C(R)), to form a disulfide bridge. The disulfide is subsequently reduced by an appropriate electron donor to complete the catalytic cycle. In this typical 2-Cys peroxiredoxin, C(R) is provided by the other dimeric subunit to form an intersubunit disulfide. The disulfide is subsequently reduced by thioredoxin.</text>
</comment>
<comment type="similarity">
    <text evidence="9">Belongs to the peroxiredoxin family. AhpC/Prx1 subfamily.</text>
</comment>
<comment type="caution">
    <text evidence="6">It is uncertain whether transit peptide cleavage occurs after His-62 or Ala-63. Peptides have been found for both N-termini in roughly equal amounts.</text>
</comment>
<name>PRDX3_BOVIN</name>
<sequence length="257" mass="28195">MAATAGRLFRASLIRHVSAIPWGISASAALRPAASRRMCLTNALWSGSDQAKFAFSTSSSYHAPAVTQHAPYFKGTAVVSGEFKEISLDDFKGKYLVLFFYPLDFTFVCPTEIIAFSDKASEFHDVNCEVVAVSVDSHFSHLAWINTPRKNGGLGHMNIALLSDLTKQISRDYGVLLEGPGLALRGLFIIDPNGVIKHLSVNDLPVGRSVEETLRLVKAFQFVEAHGEVCPANWTPESPTIKPHPTASREYFEKVNQ</sequence>
<feature type="transit peptide" description="Mitochondrion" evidence="6">
    <location>
        <begin position="1"/>
        <end position="62"/>
    </location>
</feature>
<feature type="chain" id="PRO_0000023781" description="Thioredoxin-dependent peroxide reductase, mitochondrial">
    <location>
        <begin position="63"/>
        <end position="257"/>
    </location>
</feature>
<feature type="domain" description="Thioredoxin" evidence="3">
    <location>
        <begin position="64"/>
        <end position="222"/>
    </location>
</feature>
<feature type="active site" description="Cysteine sulfenic acid (-SOH) intermediate" evidence="6">
    <location>
        <position position="109"/>
    </location>
</feature>
<feature type="modified residue" description="N6-succinyllysine" evidence="1">
    <location>
        <position position="84"/>
    </location>
</feature>
<feature type="modified residue" description="N6-acetyllysine; alternate" evidence="2">
    <location>
        <position position="92"/>
    </location>
</feature>
<feature type="modified residue" description="N6-succinyllysine; alternate" evidence="1">
    <location>
        <position position="92"/>
    </location>
</feature>
<feature type="modified residue" description="Phosphothreonine" evidence="2">
    <location>
        <position position="147"/>
    </location>
</feature>
<feature type="disulfide bond" description="Interchain (with C-230); in linked form" evidence="4 11">
    <location>
        <position position="109"/>
    </location>
</feature>
<feature type="disulfide bond" description="Interchain (with C-109); in linked form" evidence="4 11">
    <location>
        <position position="230"/>
    </location>
</feature>
<feature type="strand" evidence="12">
    <location>
        <begin position="74"/>
        <end position="79"/>
    </location>
</feature>
<feature type="strand" evidence="12">
    <location>
        <begin position="82"/>
        <end position="87"/>
    </location>
</feature>
<feature type="helix" evidence="12">
    <location>
        <begin position="88"/>
        <end position="91"/>
    </location>
</feature>
<feature type="strand" evidence="12">
    <location>
        <begin position="94"/>
        <end position="100"/>
    </location>
</feature>
<feature type="strand" evidence="12">
    <location>
        <begin position="107"/>
        <end position="109"/>
    </location>
</feature>
<feature type="helix" evidence="12">
    <location>
        <begin position="110"/>
        <end position="118"/>
    </location>
</feature>
<feature type="helix" evidence="12">
    <location>
        <begin position="120"/>
        <end position="124"/>
    </location>
</feature>
<feature type="turn" evidence="12">
    <location>
        <begin position="125"/>
        <end position="127"/>
    </location>
</feature>
<feature type="strand" evidence="12">
    <location>
        <begin position="128"/>
        <end position="136"/>
    </location>
</feature>
<feature type="helix" evidence="12">
    <location>
        <begin position="138"/>
        <end position="145"/>
    </location>
</feature>
<feature type="helix" evidence="12">
    <location>
        <begin position="149"/>
        <end position="151"/>
    </location>
</feature>
<feature type="strand" evidence="12">
    <location>
        <begin position="158"/>
        <end position="163"/>
    </location>
</feature>
<feature type="helix" evidence="12">
    <location>
        <begin position="168"/>
        <end position="172"/>
    </location>
</feature>
<feature type="turn" evidence="12">
    <location>
        <begin position="178"/>
        <end position="181"/>
    </location>
</feature>
<feature type="strand" evidence="12">
    <location>
        <begin position="185"/>
        <end position="190"/>
    </location>
</feature>
<feature type="strand" evidence="12">
    <location>
        <begin position="194"/>
        <end position="202"/>
    </location>
</feature>
<feature type="helix" evidence="12">
    <location>
        <begin position="210"/>
        <end position="225"/>
    </location>
</feature>
<reference key="1">
    <citation type="journal article" date="1996" name="DNA Seq.">
        <title>The cDNA sequence encoding bovine SP-22, a new defence system against reactive oxygen species in mitochondria.</title>
        <authorList>
            <person name="Hiroi T."/>
            <person name="Watabe S."/>
            <person name="Takimoto K."/>
            <person name="Yago N."/>
            <person name="Ymamoto Y."/>
            <person name="Takahashi S.Y."/>
        </authorList>
    </citation>
    <scope>NUCLEOTIDE SEQUENCE [MRNA]</scope>
    <source>
        <tissue>Adrenal medulla</tissue>
    </source>
</reference>
<reference key="2">
    <citation type="submission" date="2005-08" db="EMBL/GenBank/DDBJ databases">
        <authorList>
            <consortium name="NIH - Mammalian Gene Collection (MGC) project"/>
        </authorList>
    </citation>
    <scope>NUCLEOTIDE SEQUENCE [LARGE SCALE MRNA]</scope>
    <source>
        <strain>Crossbred X Angus</strain>
        <tissue>Ileum</tissue>
    </source>
</reference>
<reference key="3">
    <citation type="journal article" date="1994" name="J. Biochem.">
        <title>Purification and characterization of a substrate protein for mitochondrial ATP-dependent protease in bovine adrenal cortex.</title>
        <authorList>
            <person name="Watabe S."/>
            <person name="Kohno H."/>
            <person name="Kouyama H."/>
            <person name="Hiroi T."/>
            <person name="Yago N."/>
            <person name="Nakazawa T."/>
        </authorList>
    </citation>
    <scope>PROTEIN SEQUENCE OF 63-257</scope>
    <scope>CLEAVAGE OF TRANSIT PEPTIDE AFTER HIS-62</scope>
    <scope>SUBCELLULAR LOCATION</scope>
    <scope>TISSUE SPECIFICITY</scope>
    <source>
        <tissue>Adrenal medulla</tissue>
    </source>
</reference>
<reference key="4">
    <citation type="journal article" date="2005" name="Structure">
        <title>Bovine mitochondrial peroxiredoxin III forms a two-ring catenane.</title>
        <authorList>
            <person name="Cao Z."/>
            <person name="Roszak A.W."/>
            <person name="Gourlay L.J."/>
            <person name="Lindsay J.G."/>
            <person name="Isaacs N.W."/>
        </authorList>
    </citation>
    <scope>X-RAY CRYSTALLOGRAPHY (3.3 ANGSTROMS) OF 63-257 OF MUTANT SER-230</scope>
    <scope>SUBUNIT</scope>
</reference>
<reference key="5">
    <citation type="journal article" date="2015" name="PLoS ONE">
        <title>Improved catenated structures of bovine peroxiredoxin III F190L reveal details of ring-ring interactions and a novel conformational state.</title>
        <authorList>
            <person name="Cao Z."/>
            <person name="McGow D.P."/>
            <person name="Shepherd C."/>
            <person name="Lindsay J.G."/>
        </authorList>
    </citation>
    <scope>X-RAY CRYSTALLOGRAPHY (2.20 ANGSTROMS)</scope>
    <scope>DISULFIDE BONDS</scope>
</reference>